<comment type="function">
    <text evidence="1">Interacts with CbpA and inhibits both the DnaJ-like co-chaperone activity and the DNA binding activity of CbpA. Together with CbpA, modulates the activity of the DnaK chaperone system. Does not inhibit the co-chaperone activity of DnaJ.</text>
</comment>
<comment type="similarity">
    <text evidence="1">Belongs to the CbpM family.</text>
</comment>
<sequence>MANVTVTFTITEFCLHTGISEEELNEIVGLGVVEPREIQETTWVFDDHAAIVVQRAVRLRHELALDWPGIAVALTLMDDIAHLKQENRLLRQRLSRFVAHP</sequence>
<name>CBPM_ECO57</name>
<accession>P63265</accession>
<accession>P36660</accession>
<evidence type="ECO:0000255" key="1">
    <source>
        <dbReference type="HAMAP-Rule" id="MF_01155"/>
    </source>
</evidence>
<dbReference type="EMBL" id="AE005174">
    <property type="protein sequence ID" value="AAG55546.1"/>
    <property type="molecule type" value="Genomic_DNA"/>
</dbReference>
<dbReference type="EMBL" id="BA000007">
    <property type="protein sequence ID" value="BAB34577.1"/>
    <property type="molecule type" value="Genomic_DNA"/>
</dbReference>
<dbReference type="PIR" id="B90773">
    <property type="entry name" value="B90773"/>
</dbReference>
<dbReference type="RefSeq" id="NP_309181.1">
    <property type="nucleotide sequence ID" value="NC_002695.1"/>
</dbReference>
<dbReference type="RefSeq" id="WP_000024560.1">
    <property type="nucleotide sequence ID" value="NZ_VOAI01000025.1"/>
</dbReference>
<dbReference type="SMR" id="P63265"/>
<dbReference type="STRING" id="155864.Z1417"/>
<dbReference type="GeneID" id="915178"/>
<dbReference type="GeneID" id="93776412"/>
<dbReference type="KEGG" id="ece:Z1417"/>
<dbReference type="KEGG" id="ecs:ECs_1154"/>
<dbReference type="PATRIC" id="fig|386585.9.peg.1270"/>
<dbReference type="eggNOG" id="COG0789">
    <property type="taxonomic scope" value="Bacteria"/>
</dbReference>
<dbReference type="HOGENOM" id="CLU_144710_3_1_6"/>
<dbReference type="OMA" id="DWPGIAM"/>
<dbReference type="Proteomes" id="UP000000558">
    <property type="component" value="Chromosome"/>
</dbReference>
<dbReference type="Proteomes" id="UP000002519">
    <property type="component" value="Chromosome"/>
</dbReference>
<dbReference type="FunFam" id="1.10.1660.10:FF:000006">
    <property type="entry name" value="Chaperone modulatory protein CbpM"/>
    <property type="match status" value="1"/>
</dbReference>
<dbReference type="Gene3D" id="1.10.1660.10">
    <property type="match status" value="1"/>
</dbReference>
<dbReference type="HAMAP" id="MF_01155">
    <property type="entry name" value="CbpM"/>
    <property type="match status" value="1"/>
</dbReference>
<dbReference type="InterPro" id="IPR022835">
    <property type="entry name" value="CbpM"/>
</dbReference>
<dbReference type="NCBIfam" id="NF007617">
    <property type="entry name" value="PRK10265.1"/>
    <property type="match status" value="1"/>
</dbReference>
<dbReference type="Pfam" id="PF13591">
    <property type="entry name" value="MerR_2"/>
    <property type="match status" value="1"/>
</dbReference>
<keyword id="KW-1185">Reference proteome</keyword>
<feature type="chain" id="PRO_0000211628" description="Chaperone modulatory protein CbpM">
    <location>
        <begin position="1"/>
        <end position="101"/>
    </location>
</feature>
<proteinExistence type="inferred from homology"/>
<reference key="1">
    <citation type="journal article" date="2001" name="Nature">
        <title>Genome sequence of enterohaemorrhagic Escherichia coli O157:H7.</title>
        <authorList>
            <person name="Perna N.T."/>
            <person name="Plunkett G. III"/>
            <person name="Burland V."/>
            <person name="Mau B."/>
            <person name="Glasner J.D."/>
            <person name="Rose D.J."/>
            <person name="Mayhew G.F."/>
            <person name="Evans P.S."/>
            <person name="Gregor J."/>
            <person name="Kirkpatrick H.A."/>
            <person name="Posfai G."/>
            <person name="Hackett J."/>
            <person name="Klink S."/>
            <person name="Boutin A."/>
            <person name="Shao Y."/>
            <person name="Miller L."/>
            <person name="Grotbeck E.J."/>
            <person name="Davis N.W."/>
            <person name="Lim A."/>
            <person name="Dimalanta E.T."/>
            <person name="Potamousis K."/>
            <person name="Apodaca J."/>
            <person name="Anantharaman T.S."/>
            <person name="Lin J."/>
            <person name="Yen G."/>
            <person name="Schwartz D.C."/>
            <person name="Welch R.A."/>
            <person name="Blattner F.R."/>
        </authorList>
    </citation>
    <scope>NUCLEOTIDE SEQUENCE [LARGE SCALE GENOMIC DNA]</scope>
    <source>
        <strain>O157:H7 / EDL933 / ATCC 700927 / EHEC</strain>
    </source>
</reference>
<reference key="2">
    <citation type="journal article" date="2001" name="DNA Res.">
        <title>Complete genome sequence of enterohemorrhagic Escherichia coli O157:H7 and genomic comparison with a laboratory strain K-12.</title>
        <authorList>
            <person name="Hayashi T."/>
            <person name="Makino K."/>
            <person name="Ohnishi M."/>
            <person name="Kurokawa K."/>
            <person name="Ishii K."/>
            <person name="Yokoyama K."/>
            <person name="Han C.-G."/>
            <person name="Ohtsubo E."/>
            <person name="Nakayama K."/>
            <person name="Murata T."/>
            <person name="Tanaka M."/>
            <person name="Tobe T."/>
            <person name="Iida T."/>
            <person name="Takami H."/>
            <person name="Honda T."/>
            <person name="Sasakawa C."/>
            <person name="Ogasawara N."/>
            <person name="Yasunaga T."/>
            <person name="Kuhara S."/>
            <person name="Shiba T."/>
            <person name="Hattori M."/>
            <person name="Shinagawa H."/>
        </authorList>
    </citation>
    <scope>NUCLEOTIDE SEQUENCE [LARGE SCALE GENOMIC DNA]</scope>
    <source>
        <strain>O157:H7 / Sakai / RIMD 0509952 / EHEC</strain>
    </source>
</reference>
<protein>
    <recommendedName>
        <fullName evidence="1">Chaperone modulatory protein CbpM</fullName>
    </recommendedName>
</protein>
<gene>
    <name evidence="1" type="primary">cbpM</name>
    <name type="ordered locus">Z1417</name>
    <name type="ordered locus">ECs1154</name>
</gene>
<organism>
    <name type="scientific">Escherichia coli O157:H7</name>
    <dbReference type="NCBI Taxonomy" id="83334"/>
    <lineage>
        <taxon>Bacteria</taxon>
        <taxon>Pseudomonadati</taxon>
        <taxon>Pseudomonadota</taxon>
        <taxon>Gammaproteobacteria</taxon>
        <taxon>Enterobacterales</taxon>
        <taxon>Enterobacteriaceae</taxon>
        <taxon>Escherichia</taxon>
    </lineage>
</organism>